<proteinExistence type="inferred from homology"/>
<keyword id="KW-0235">DNA replication</keyword>
<keyword id="KW-0236">DNA replication inhibitor</keyword>
<keyword id="KW-1185">Reference proteome</keyword>
<organism>
    <name type="scientific">Escherichia coli (strain 55989 / EAEC)</name>
    <dbReference type="NCBI Taxonomy" id="585055"/>
    <lineage>
        <taxon>Bacteria</taxon>
        <taxon>Pseudomonadati</taxon>
        <taxon>Pseudomonadota</taxon>
        <taxon>Gammaproteobacteria</taxon>
        <taxon>Enterobacterales</taxon>
        <taxon>Enterobacteriaceae</taxon>
        <taxon>Escherichia</taxon>
    </lineage>
</organism>
<name>HDA_ECO55</name>
<feature type="chain" id="PRO_1000164298" description="DnaA regulatory inactivator Hda">
    <location>
        <begin position="1"/>
        <end position="233"/>
    </location>
</feature>
<accession>B7LCN6</accession>
<dbReference type="EMBL" id="CU928145">
    <property type="protein sequence ID" value="CAU98654.1"/>
    <property type="status" value="ALT_INIT"/>
    <property type="molecule type" value="Genomic_DNA"/>
</dbReference>
<dbReference type="RefSeq" id="WP_001307333.1">
    <property type="nucleotide sequence ID" value="NZ_CP028304.1"/>
</dbReference>
<dbReference type="SMR" id="B7LCN6"/>
<dbReference type="KEGG" id="eck:EC55989_2781"/>
<dbReference type="HOGENOM" id="CLU_072265_1_1_6"/>
<dbReference type="Proteomes" id="UP000000746">
    <property type="component" value="Chromosome"/>
</dbReference>
<dbReference type="GO" id="GO:0006270">
    <property type="term" value="P:DNA replication initiation"/>
    <property type="evidence" value="ECO:0007669"/>
    <property type="project" value="TreeGrafter"/>
</dbReference>
<dbReference type="GO" id="GO:0032297">
    <property type="term" value="P:negative regulation of DNA-templated DNA replication initiation"/>
    <property type="evidence" value="ECO:0007669"/>
    <property type="project" value="InterPro"/>
</dbReference>
<dbReference type="FunFam" id="1.10.8.60:FF:000024">
    <property type="entry name" value="DnaA regulatory inactivator Hda"/>
    <property type="match status" value="1"/>
</dbReference>
<dbReference type="FunFam" id="3.40.50.300:FF:000452">
    <property type="entry name" value="DnaA regulatory inactivator Hda"/>
    <property type="match status" value="1"/>
</dbReference>
<dbReference type="Gene3D" id="1.10.8.60">
    <property type="match status" value="1"/>
</dbReference>
<dbReference type="Gene3D" id="3.40.50.300">
    <property type="entry name" value="P-loop containing nucleotide triphosphate hydrolases"/>
    <property type="match status" value="1"/>
</dbReference>
<dbReference type="HAMAP" id="MF_01158">
    <property type="entry name" value="Hda"/>
    <property type="match status" value="1"/>
</dbReference>
<dbReference type="InterPro" id="IPR020591">
    <property type="entry name" value="Chromosome_initiator_DnaA-like"/>
</dbReference>
<dbReference type="InterPro" id="IPR013317">
    <property type="entry name" value="DnaA_dom"/>
</dbReference>
<dbReference type="InterPro" id="IPR017788">
    <property type="entry name" value="Hda"/>
</dbReference>
<dbReference type="InterPro" id="IPR022864">
    <property type="entry name" value="Hda_Enterobact"/>
</dbReference>
<dbReference type="InterPro" id="IPR055199">
    <property type="entry name" value="Hda_lid"/>
</dbReference>
<dbReference type="InterPro" id="IPR027417">
    <property type="entry name" value="P-loop_NTPase"/>
</dbReference>
<dbReference type="NCBIfam" id="TIGR03420">
    <property type="entry name" value="DnaA_homol_Hda"/>
    <property type="match status" value="1"/>
</dbReference>
<dbReference type="NCBIfam" id="NF005982">
    <property type="entry name" value="PRK08084.1"/>
    <property type="match status" value="1"/>
</dbReference>
<dbReference type="PANTHER" id="PTHR30050">
    <property type="entry name" value="CHROMOSOMAL REPLICATION INITIATOR PROTEIN DNAA"/>
    <property type="match status" value="1"/>
</dbReference>
<dbReference type="PANTHER" id="PTHR30050:SF5">
    <property type="entry name" value="DNAA REGULATORY INACTIVATOR HDA"/>
    <property type="match status" value="1"/>
</dbReference>
<dbReference type="Pfam" id="PF00308">
    <property type="entry name" value="Bac_DnaA"/>
    <property type="match status" value="1"/>
</dbReference>
<dbReference type="Pfam" id="PF22688">
    <property type="entry name" value="Hda_lid"/>
    <property type="match status" value="1"/>
</dbReference>
<dbReference type="PRINTS" id="PR00051">
    <property type="entry name" value="DNAA"/>
</dbReference>
<dbReference type="SUPFAM" id="SSF52540">
    <property type="entry name" value="P-loop containing nucleoside triphosphate hydrolases"/>
    <property type="match status" value="1"/>
</dbReference>
<evidence type="ECO:0000250" key="1"/>
<evidence type="ECO:0000255" key="2">
    <source>
        <dbReference type="HAMAP-Rule" id="MF_01158"/>
    </source>
</evidence>
<evidence type="ECO:0000305" key="3"/>
<gene>
    <name evidence="2" type="primary">hda</name>
    <name type="ordered locus">EC55989_2781</name>
</gene>
<protein>
    <recommendedName>
        <fullName evidence="2">DnaA regulatory inactivator Hda</fullName>
    </recommendedName>
</protein>
<comment type="function">
    <text evidence="1">Mediates the interaction of DNA replication initiator protein DnaA with DNA polymerase subunit beta sliding clamp (dnaN). Stimulates hydrolysis of ATP-DnaA to ADP-DnaA, rendering DnaA inactive for reinitiation, a process called regulatory inhibition of DnaA or RIDA (By similarity).</text>
</comment>
<comment type="subunit">
    <text evidence="2">The active form seems to be an ADP-bound monomer. Forms the RIDA complex (regulatory inactivation of DnaA) of ATP-DnaA, ADP-Hda and the DNA-loaded beta sliding clamp (dnaN).</text>
</comment>
<comment type="similarity">
    <text evidence="2">Belongs to the DnaA family. HdA subfamily.</text>
</comment>
<comment type="sequence caution" evidence="3">
    <conflict type="erroneous initiation">
        <sequence resource="EMBL-CDS" id="CAU98654"/>
    </conflict>
</comment>
<sequence>MNTPAQLSLPLYLPDDETFASFWPGDNSSLLAALQNVLRQEHSGYIYLWAREGAGRSHLLHAACAELSQRGDAVGYVPLDKRTWFVPEVLDGMEHLSLVCIDNIECIAGDELWEMAIFDLYNRILESGKTRLLITGDRPPRQLNLGLPDLASRLDWGQIYKLQPLSDEDKLQALQLRARLRGFELPEDVGRFLLKRLDREMRTLFMTLDQLDRASITAQRKLTIPFVKEILKL</sequence>
<reference key="1">
    <citation type="journal article" date="2009" name="PLoS Genet.">
        <title>Organised genome dynamics in the Escherichia coli species results in highly diverse adaptive paths.</title>
        <authorList>
            <person name="Touchon M."/>
            <person name="Hoede C."/>
            <person name="Tenaillon O."/>
            <person name="Barbe V."/>
            <person name="Baeriswyl S."/>
            <person name="Bidet P."/>
            <person name="Bingen E."/>
            <person name="Bonacorsi S."/>
            <person name="Bouchier C."/>
            <person name="Bouvet O."/>
            <person name="Calteau A."/>
            <person name="Chiapello H."/>
            <person name="Clermont O."/>
            <person name="Cruveiller S."/>
            <person name="Danchin A."/>
            <person name="Diard M."/>
            <person name="Dossat C."/>
            <person name="Karoui M.E."/>
            <person name="Frapy E."/>
            <person name="Garry L."/>
            <person name="Ghigo J.M."/>
            <person name="Gilles A.M."/>
            <person name="Johnson J."/>
            <person name="Le Bouguenec C."/>
            <person name="Lescat M."/>
            <person name="Mangenot S."/>
            <person name="Martinez-Jehanne V."/>
            <person name="Matic I."/>
            <person name="Nassif X."/>
            <person name="Oztas S."/>
            <person name="Petit M.A."/>
            <person name="Pichon C."/>
            <person name="Rouy Z."/>
            <person name="Ruf C.S."/>
            <person name="Schneider D."/>
            <person name="Tourret J."/>
            <person name="Vacherie B."/>
            <person name="Vallenet D."/>
            <person name="Medigue C."/>
            <person name="Rocha E.P.C."/>
            <person name="Denamur E."/>
        </authorList>
    </citation>
    <scope>NUCLEOTIDE SEQUENCE [LARGE SCALE GENOMIC DNA]</scope>
    <source>
        <strain>55989 / EAEC</strain>
    </source>
</reference>